<comment type="function">
    <text evidence="1">Catalyzes the phosphorylation of riboflavin to FMN followed by the adenylation of FMN to FAD (PubMed:27672192). Can also catalyze the phosphorylation of the toxic riboflavin analogs 8-demethyl-8-aminoriboflavin (AF) to 8-demethyl-8-aminoriboflavin mononucleotide (AFMN) and roseoflavin (RoF) to roseoflavin mononucleotide (RoFMN), and the adenylation of AFMN to 8-demethyl-8-aminoriboflavin adenine dinucleotide (AFAD) (PubMed:27672192).</text>
</comment>
<comment type="catalytic activity">
    <reaction evidence="1">
        <text>riboflavin + ATP = FMN + ADP + H(+)</text>
        <dbReference type="Rhea" id="RHEA:14357"/>
        <dbReference type="ChEBI" id="CHEBI:15378"/>
        <dbReference type="ChEBI" id="CHEBI:30616"/>
        <dbReference type="ChEBI" id="CHEBI:57986"/>
        <dbReference type="ChEBI" id="CHEBI:58210"/>
        <dbReference type="ChEBI" id="CHEBI:456216"/>
        <dbReference type="EC" id="2.7.1.26"/>
    </reaction>
</comment>
<comment type="catalytic activity">
    <reaction evidence="1">
        <text>FMN + ATP + H(+) = FAD + diphosphate</text>
        <dbReference type="Rhea" id="RHEA:17237"/>
        <dbReference type="ChEBI" id="CHEBI:15378"/>
        <dbReference type="ChEBI" id="CHEBI:30616"/>
        <dbReference type="ChEBI" id="CHEBI:33019"/>
        <dbReference type="ChEBI" id="CHEBI:57692"/>
        <dbReference type="ChEBI" id="CHEBI:58210"/>
        <dbReference type="EC" id="2.7.7.2"/>
    </reaction>
</comment>
<comment type="biophysicochemical properties">
    <kinetics>
        <KM evidence="1">6.9 uM for riboflavin</KM>
        <KM evidence="1">29.2 uM for FMN</KM>
        <Vmax evidence="1">668.0 nmol/min/mg enzyme with riboflavin as substrate</Vmax>
        <Vmax evidence="1">3706.0 nmol/min/mg enzyme with FMN as substrate</Vmax>
        <text evidence="1">kcat is 0.40 sec(-1) with riboflavin as substrate. kcat is 4.39 sec(-1) with FMN as substrate.</text>
    </kinetics>
</comment>
<comment type="pathway">
    <text evidence="1">Cofactor biosynthesis; FAD biosynthesis; FAD from FMN: step 1/1.</text>
</comment>
<comment type="pathway">
    <text evidence="1">Cofactor biosynthesis; FMN biosynthesis; FMN from riboflavin (ATP route): step 1/1.</text>
</comment>
<comment type="similarity">
    <text evidence="3">Belongs to the RibF family.</text>
</comment>
<accession>Q8Y7F2</accession>
<dbReference type="EC" id="2.7.1.26" evidence="1"/>
<dbReference type="EC" id="2.7.7.2" evidence="1"/>
<dbReference type="EMBL" id="AL591978">
    <property type="protein sequence ID" value="CAC99407.1"/>
    <property type="molecule type" value="Genomic_DNA"/>
</dbReference>
<dbReference type="PIR" id="AI1240">
    <property type="entry name" value="AI1240"/>
</dbReference>
<dbReference type="RefSeq" id="NP_464854.1">
    <property type="nucleotide sequence ID" value="NC_003210.1"/>
</dbReference>
<dbReference type="RefSeq" id="WP_009925599.1">
    <property type="nucleotide sequence ID" value="NZ_CP149495.1"/>
</dbReference>
<dbReference type="SMR" id="Q8Y7F2"/>
<dbReference type="STRING" id="169963.gene:17593986"/>
<dbReference type="PaxDb" id="169963-lmo1329"/>
<dbReference type="DNASU" id="987710"/>
<dbReference type="EnsemblBacteria" id="CAC99407">
    <property type="protein sequence ID" value="CAC99407"/>
    <property type="gene ID" value="CAC99407"/>
</dbReference>
<dbReference type="GeneID" id="987710"/>
<dbReference type="KEGG" id="lmo:lmo1329"/>
<dbReference type="PATRIC" id="fig|169963.11.peg.1366"/>
<dbReference type="eggNOG" id="COG0196">
    <property type="taxonomic scope" value="Bacteria"/>
</dbReference>
<dbReference type="HOGENOM" id="CLU_048437_0_2_9"/>
<dbReference type="OrthoDB" id="9803667at2"/>
<dbReference type="PhylomeDB" id="Q8Y7F2"/>
<dbReference type="BioCyc" id="LMON169963:LMO1329-MONOMER"/>
<dbReference type="UniPathway" id="UPA00276">
    <property type="reaction ID" value="UER00406"/>
</dbReference>
<dbReference type="UniPathway" id="UPA00277">
    <property type="reaction ID" value="UER00407"/>
</dbReference>
<dbReference type="PHI-base" id="PHI:123027"/>
<dbReference type="Proteomes" id="UP000000817">
    <property type="component" value="Chromosome"/>
</dbReference>
<dbReference type="GO" id="GO:0005524">
    <property type="term" value="F:ATP binding"/>
    <property type="evidence" value="ECO:0007669"/>
    <property type="project" value="UniProtKB-KW"/>
</dbReference>
<dbReference type="GO" id="GO:0003919">
    <property type="term" value="F:FMN adenylyltransferase activity"/>
    <property type="evidence" value="ECO:0007669"/>
    <property type="project" value="UniProtKB-EC"/>
</dbReference>
<dbReference type="GO" id="GO:0008531">
    <property type="term" value="F:riboflavin kinase activity"/>
    <property type="evidence" value="ECO:0000318"/>
    <property type="project" value="GO_Central"/>
</dbReference>
<dbReference type="GO" id="GO:0006747">
    <property type="term" value="P:FAD biosynthetic process"/>
    <property type="evidence" value="ECO:0007669"/>
    <property type="project" value="UniProtKB-UniPathway"/>
</dbReference>
<dbReference type="GO" id="GO:0009398">
    <property type="term" value="P:FMN biosynthetic process"/>
    <property type="evidence" value="ECO:0000318"/>
    <property type="project" value="GO_Central"/>
</dbReference>
<dbReference type="GO" id="GO:0009231">
    <property type="term" value="P:riboflavin biosynthetic process"/>
    <property type="evidence" value="ECO:0007669"/>
    <property type="project" value="InterPro"/>
</dbReference>
<dbReference type="GO" id="GO:0006771">
    <property type="term" value="P:riboflavin metabolic process"/>
    <property type="evidence" value="ECO:0000318"/>
    <property type="project" value="GO_Central"/>
</dbReference>
<dbReference type="CDD" id="cd02064">
    <property type="entry name" value="FAD_synthetase_N"/>
    <property type="match status" value="1"/>
</dbReference>
<dbReference type="FunFam" id="2.40.30.30:FF:000004">
    <property type="entry name" value="Riboflavin biosynthesis protein"/>
    <property type="match status" value="1"/>
</dbReference>
<dbReference type="FunFam" id="3.40.50.620:FF:000021">
    <property type="entry name" value="Riboflavin biosynthesis protein"/>
    <property type="match status" value="1"/>
</dbReference>
<dbReference type="Gene3D" id="3.40.50.620">
    <property type="entry name" value="HUPs"/>
    <property type="match status" value="1"/>
</dbReference>
<dbReference type="Gene3D" id="2.40.30.30">
    <property type="entry name" value="Riboflavin kinase-like"/>
    <property type="match status" value="1"/>
</dbReference>
<dbReference type="InterPro" id="IPR004821">
    <property type="entry name" value="Cyt_trans-like"/>
</dbReference>
<dbReference type="InterPro" id="IPR015864">
    <property type="entry name" value="FAD_synthase"/>
</dbReference>
<dbReference type="InterPro" id="IPR023468">
    <property type="entry name" value="Riboflavin_kinase"/>
</dbReference>
<dbReference type="InterPro" id="IPR002606">
    <property type="entry name" value="Riboflavin_kinase_bac"/>
</dbReference>
<dbReference type="InterPro" id="IPR015865">
    <property type="entry name" value="Riboflavin_kinase_bac/euk"/>
</dbReference>
<dbReference type="InterPro" id="IPR023465">
    <property type="entry name" value="Riboflavin_kinase_dom_sf"/>
</dbReference>
<dbReference type="InterPro" id="IPR014729">
    <property type="entry name" value="Rossmann-like_a/b/a_fold"/>
</dbReference>
<dbReference type="NCBIfam" id="TIGR00125">
    <property type="entry name" value="cyt_tran_rel"/>
    <property type="match status" value="1"/>
</dbReference>
<dbReference type="NCBIfam" id="NF004160">
    <property type="entry name" value="PRK05627.1-3"/>
    <property type="match status" value="1"/>
</dbReference>
<dbReference type="NCBIfam" id="NF004162">
    <property type="entry name" value="PRK05627.1-5"/>
    <property type="match status" value="1"/>
</dbReference>
<dbReference type="NCBIfam" id="TIGR00083">
    <property type="entry name" value="ribF"/>
    <property type="match status" value="1"/>
</dbReference>
<dbReference type="PANTHER" id="PTHR22749:SF6">
    <property type="entry name" value="RIBOFLAVIN KINASE"/>
    <property type="match status" value="1"/>
</dbReference>
<dbReference type="PANTHER" id="PTHR22749">
    <property type="entry name" value="RIBOFLAVIN KINASE/FMN ADENYLYLTRANSFERASE"/>
    <property type="match status" value="1"/>
</dbReference>
<dbReference type="Pfam" id="PF06574">
    <property type="entry name" value="FAD_syn"/>
    <property type="match status" value="1"/>
</dbReference>
<dbReference type="Pfam" id="PF01687">
    <property type="entry name" value="Flavokinase"/>
    <property type="match status" value="1"/>
</dbReference>
<dbReference type="PIRSF" id="PIRSF004491">
    <property type="entry name" value="FAD_Synth"/>
    <property type="match status" value="1"/>
</dbReference>
<dbReference type="SMART" id="SM00904">
    <property type="entry name" value="Flavokinase"/>
    <property type="match status" value="1"/>
</dbReference>
<dbReference type="SUPFAM" id="SSF52374">
    <property type="entry name" value="Nucleotidylyl transferase"/>
    <property type="match status" value="1"/>
</dbReference>
<dbReference type="SUPFAM" id="SSF82114">
    <property type="entry name" value="Riboflavin kinase-like"/>
    <property type="match status" value="1"/>
</dbReference>
<protein>
    <recommendedName>
        <fullName evidence="3">Bifunctional riboflavin kinase/FMN adenylyltransferase</fullName>
    </recommendedName>
    <alternativeName>
        <fullName evidence="2">Bifunctional flavokinase/FAD synthetase</fullName>
    </alternativeName>
    <alternativeName>
        <fullName evidence="3">Riboflavin biosynthesis protein RibCF</fullName>
    </alternativeName>
    <domain>
        <recommendedName>
            <fullName evidence="3">Riboflavin kinase</fullName>
            <ecNumber evidence="1">2.7.1.26</ecNumber>
        </recommendedName>
        <alternativeName>
            <fullName evidence="3">Flavokinase</fullName>
        </alternativeName>
    </domain>
    <domain>
        <recommendedName>
            <fullName evidence="3">FMN adenylyltransferase</fullName>
            <ecNumber evidence="1">2.7.7.2</ecNumber>
        </recommendedName>
        <alternativeName>
            <fullName evidence="3">FAD pyrophosphorylase</fullName>
        </alternativeName>
        <alternativeName>
            <fullName evidence="3">FAD synthase</fullName>
        </alternativeName>
    </domain>
</protein>
<evidence type="ECO:0000269" key="1">
    <source>
    </source>
</evidence>
<evidence type="ECO:0000303" key="2">
    <source>
    </source>
</evidence>
<evidence type="ECO:0000305" key="3"/>
<evidence type="ECO:0000312" key="4">
    <source>
        <dbReference type="EMBL" id="CAC99407.1"/>
    </source>
</evidence>
<sequence length="314" mass="35526">MKTIYLHHPITTDEWTDINKVMALGFFDGVHLGHQAVIKQAKQIAGQKGLQTAVLTFDPHPSVVLSNIRKQVKYLTPLEDKAEKMAKLGVDIMYVVRFTTQFSELSPQAFVDNYLVALHVEHVVAGFDYSYGKKGEGKMTDLAKYADGRFEVTIVDKQTAASDKISSTNIRRAITEGELEEANQLLGYPYTTKGTVIHGDKRGRTIGFPTANIRVNEDYLIPKLGVYAVKFRVNGETHLGMASIGYNITFKDDQALSIEVYILDFHREIYGEEAEIKWYQFFRPELKFNGVEGLIAQLEKDEQDTRAFFAKLED</sequence>
<name>RIBCF_LISMO</name>
<feature type="chain" id="PRO_0000448897" description="Bifunctional riboflavin kinase/FMN adenylyltransferase">
    <location>
        <begin position="1"/>
        <end position="314"/>
    </location>
</feature>
<keyword id="KW-0067">ATP-binding</keyword>
<keyword id="KW-0274">FAD</keyword>
<keyword id="KW-0285">Flavoprotein</keyword>
<keyword id="KW-0288">FMN</keyword>
<keyword id="KW-0418">Kinase</keyword>
<keyword id="KW-0511">Multifunctional enzyme</keyword>
<keyword id="KW-0547">Nucleotide-binding</keyword>
<keyword id="KW-0548">Nucleotidyltransferase</keyword>
<keyword id="KW-1185">Reference proteome</keyword>
<keyword id="KW-0808">Transferase</keyword>
<organism>
    <name type="scientific">Listeria monocytogenes serovar 1/2a (strain ATCC BAA-679 / EGD-e)</name>
    <dbReference type="NCBI Taxonomy" id="169963"/>
    <lineage>
        <taxon>Bacteria</taxon>
        <taxon>Bacillati</taxon>
        <taxon>Bacillota</taxon>
        <taxon>Bacilli</taxon>
        <taxon>Bacillales</taxon>
        <taxon>Listeriaceae</taxon>
        <taxon>Listeria</taxon>
    </lineage>
</organism>
<proteinExistence type="evidence at protein level"/>
<gene>
    <name evidence="2" type="primary">ribCF</name>
    <name evidence="4" type="synonym">ribC</name>
    <name type="ordered locus">lmo1329</name>
</gene>
<reference key="1">
    <citation type="journal article" date="2001" name="Science">
        <title>Comparative genomics of Listeria species.</title>
        <authorList>
            <person name="Glaser P."/>
            <person name="Frangeul L."/>
            <person name="Buchrieser C."/>
            <person name="Rusniok C."/>
            <person name="Amend A."/>
            <person name="Baquero F."/>
            <person name="Berche P."/>
            <person name="Bloecker H."/>
            <person name="Brandt P."/>
            <person name="Chakraborty T."/>
            <person name="Charbit A."/>
            <person name="Chetouani F."/>
            <person name="Couve E."/>
            <person name="de Daruvar A."/>
            <person name="Dehoux P."/>
            <person name="Domann E."/>
            <person name="Dominguez-Bernal G."/>
            <person name="Duchaud E."/>
            <person name="Durant L."/>
            <person name="Dussurget O."/>
            <person name="Entian K.-D."/>
            <person name="Fsihi H."/>
            <person name="Garcia-del Portillo F."/>
            <person name="Garrido P."/>
            <person name="Gautier L."/>
            <person name="Goebel W."/>
            <person name="Gomez-Lopez N."/>
            <person name="Hain T."/>
            <person name="Hauf J."/>
            <person name="Jackson D."/>
            <person name="Jones L.-M."/>
            <person name="Kaerst U."/>
            <person name="Kreft J."/>
            <person name="Kuhn M."/>
            <person name="Kunst F."/>
            <person name="Kurapkat G."/>
            <person name="Madueno E."/>
            <person name="Maitournam A."/>
            <person name="Mata Vicente J."/>
            <person name="Ng E."/>
            <person name="Nedjari H."/>
            <person name="Nordsiek G."/>
            <person name="Novella S."/>
            <person name="de Pablos B."/>
            <person name="Perez-Diaz J.-C."/>
            <person name="Purcell R."/>
            <person name="Remmel B."/>
            <person name="Rose M."/>
            <person name="Schlueter T."/>
            <person name="Simoes N."/>
            <person name="Tierrez A."/>
            <person name="Vazquez-Boland J.-A."/>
            <person name="Voss H."/>
            <person name="Wehland J."/>
            <person name="Cossart P."/>
        </authorList>
    </citation>
    <scope>NUCLEOTIDE SEQUENCE [LARGE SCALE GENOMIC DNA]</scope>
    <source>
        <strain>ATCC BAA-679 / EGD-e</strain>
    </source>
</reference>
<reference key="2">
    <citation type="journal article" date="2016" name="J. Bacteriol.">
        <title>Uptake and metabolism of antibiotics roseoflavin and 8-demethyl-8-aminoriboflavin in riboflavin-auxotrophic Listeria monocytogenes.</title>
        <authorList>
            <person name="Matern A."/>
            <person name="Pedrolli D."/>
            <person name="Grosshennig S."/>
            <person name="Johansson J."/>
            <person name="Mack M."/>
        </authorList>
    </citation>
    <scope>FUNCTION</scope>
    <scope>CATALYTIC ACTIVITY</scope>
    <scope>BIOPHYSICOCHEMICAL PROPERTIES</scope>
    <scope>PATHWAY</scope>
</reference>